<sequence length="97" mass="11787">MDLEEIRKKKLEELKKEEAKRKLLEQLESNVMQYLTSEAKQRLYNIKMAHPEKYELALQILYRVIQQTPTIIDDTTLKKLLAKLFQKREPKIRFIRK</sequence>
<feature type="chain" id="PRO_0000284566" description="DNA-binding protein NEQ150">
    <location>
        <begin position="1"/>
        <end position="97"/>
    </location>
</feature>
<comment type="similarity">
    <text evidence="1">Belongs to the PDCD5 family.</text>
</comment>
<reference key="1">
    <citation type="journal article" date="2003" name="Proc. Natl. Acad. Sci. U.S.A.">
        <title>The genome of Nanoarchaeum equitans: insights into early archaeal evolution and derived parasitism.</title>
        <authorList>
            <person name="Waters E."/>
            <person name="Hohn M.J."/>
            <person name="Ahel I."/>
            <person name="Graham D.E."/>
            <person name="Adams M.D."/>
            <person name="Barnstead M."/>
            <person name="Beeson K.Y."/>
            <person name="Bibbs L."/>
            <person name="Bolanos R."/>
            <person name="Keller M."/>
            <person name="Kretz K."/>
            <person name="Lin X."/>
            <person name="Mathur E."/>
            <person name="Ni J."/>
            <person name="Podar M."/>
            <person name="Richardson T."/>
            <person name="Sutton G.G."/>
            <person name="Simon M."/>
            <person name="Soell D."/>
            <person name="Stetter K.O."/>
            <person name="Short J.M."/>
            <person name="Noorderwier M."/>
        </authorList>
    </citation>
    <scope>NUCLEOTIDE SEQUENCE [LARGE SCALE GENOMIC DNA]</scope>
    <source>
        <strain>Kin4-M</strain>
    </source>
</reference>
<accession>Q74NA9</accession>
<protein>
    <recommendedName>
        <fullName>DNA-binding protein NEQ150</fullName>
    </recommendedName>
</protein>
<keyword id="KW-0238">DNA-binding</keyword>
<keyword id="KW-1185">Reference proteome</keyword>
<name>Y150_NANEQ</name>
<organism>
    <name type="scientific">Nanoarchaeum equitans (strain Kin4-M)</name>
    <dbReference type="NCBI Taxonomy" id="228908"/>
    <lineage>
        <taxon>Archaea</taxon>
        <taxon>Nanobdellota</taxon>
        <taxon>Candidatus Nanoarchaeia</taxon>
        <taxon>Nanoarchaeales</taxon>
        <taxon>Nanoarchaeaceae</taxon>
        <taxon>Nanoarchaeum</taxon>
    </lineage>
</organism>
<proteinExistence type="inferred from homology"/>
<gene>
    <name type="ordered locus">NEQ150</name>
</gene>
<evidence type="ECO:0000305" key="1"/>
<dbReference type="EMBL" id="AE017199">
    <property type="protein sequence ID" value="AAR39004.1"/>
    <property type="molecule type" value="Genomic_DNA"/>
</dbReference>
<dbReference type="SMR" id="Q74NA9"/>
<dbReference type="STRING" id="228908.NEQ150"/>
<dbReference type="EnsemblBacteria" id="AAR39004">
    <property type="protein sequence ID" value="AAR39004"/>
    <property type="gene ID" value="NEQ150"/>
</dbReference>
<dbReference type="KEGG" id="neq:NEQ150"/>
<dbReference type="HOGENOM" id="CLU_2340243_0_0_2"/>
<dbReference type="BioCyc" id="NEQU228908:GJB6-160-MONOMER"/>
<dbReference type="Proteomes" id="UP000000578">
    <property type="component" value="Chromosome"/>
</dbReference>
<dbReference type="GO" id="GO:0003677">
    <property type="term" value="F:DNA binding"/>
    <property type="evidence" value="ECO:0007669"/>
    <property type="project" value="UniProtKB-KW"/>
</dbReference>
<dbReference type="Gene3D" id="1.10.8.140">
    <property type="entry name" value="PDCD5-like"/>
    <property type="match status" value="1"/>
</dbReference>
<dbReference type="InterPro" id="IPR002836">
    <property type="entry name" value="PDCD5-like"/>
</dbReference>
<dbReference type="InterPro" id="IPR036883">
    <property type="entry name" value="PDCD5-like_sf"/>
</dbReference>
<dbReference type="Pfam" id="PF01984">
    <property type="entry name" value="dsDNA_bind"/>
    <property type="match status" value="1"/>
</dbReference>
<dbReference type="PIRSF" id="PIRSF015730">
    <property type="entry name" value="TFAR19"/>
    <property type="match status" value="1"/>
</dbReference>
<dbReference type="SUPFAM" id="SSF46950">
    <property type="entry name" value="Double-stranded DNA-binding domain"/>
    <property type="match status" value="1"/>
</dbReference>